<protein>
    <recommendedName>
        <fullName>Nodulation protein NolU</fullName>
    </recommendedName>
</protein>
<proteinExistence type="evidence at transcript level"/>
<feature type="chain" id="PRO_0000096947" description="Nodulation protein NolU">
    <location>
        <begin position="1"/>
        <end position="212"/>
    </location>
</feature>
<organism>
    <name type="scientific">Rhizobium fredii</name>
    <name type="common">Sinorhizobium fredii</name>
    <dbReference type="NCBI Taxonomy" id="380"/>
    <lineage>
        <taxon>Bacteria</taxon>
        <taxon>Pseudomonadati</taxon>
        <taxon>Pseudomonadota</taxon>
        <taxon>Alphaproteobacteria</taxon>
        <taxon>Hyphomicrobiales</taxon>
        <taxon>Rhizobiaceae</taxon>
        <taxon>Sinorhizobium/Ensifer group</taxon>
        <taxon>Sinorhizobium</taxon>
    </lineage>
</organism>
<accession>P33210</accession>
<keyword id="KW-0536">Nodulation</keyword>
<keyword id="KW-0614">Plasmid</keyword>
<comment type="function">
    <text>Regulates cultivar-specific nodulation of soybean.</text>
</comment>
<comment type="developmental stage">
    <text>Expressed continuously from preinfection to the stage of the functional nodule.</text>
</comment>
<comment type="induction">
    <text>By flavonoid signal compounds.</text>
</comment>
<comment type="caution">
    <text evidence="1">It is uncertain whether Met-1 or Met-5 is the initiator.</text>
</comment>
<gene>
    <name type="primary">nolU</name>
</gene>
<sequence>MKLPMPIAIQNTQPDVSFQSHSVPRSELAASTHPTRLAARLDPELSAATVVQLQKCARLQPRLAELLLGNDMDWNRIGWGPDLLRGHDPRRAALLAGSIWHARSLLKVVSQRDLARLVERIGADAHAFGIRHLAHAIADKLISDPEKLALQIEHDGHACLGAWLNIRPALERNRVLLRLPLGTAAENPAPEHDGASSGLFSLVIAHFEMESP</sequence>
<name>NOLU_RHIFR</name>
<reference key="1">
    <citation type="journal article" date="1993" name="Mol. Microbiol.">
        <title>Molecular cloning and characterization of a sym plasmid locus that regulates cultivar-specific nodulation of soybean by Rhizobium fredii USDA257.</title>
        <authorList>
            <person name="Meinhardt L.W."/>
            <person name="Krishnan H.B."/>
            <person name="Balatti P.A."/>
            <person name="Pueppke S.G."/>
        </authorList>
    </citation>
    <scope>NUCLEOTIDE SEQUENCE [GENOMIC DNA]</scope>
    <source>
        <strain>USDA 257</strain>
    </source>
</reference>
<dbReference type="EMBL" id="L12251">
    <property type="protein sequence ID" value="AAB17678.1"/>
    <property type="molecule type" value="Genomic_DNA"/>
</dbReference>
<dbReference type="PIR" id="S35023">
    <property type="entry name" value="S35023"/>
</dbReference>
<evidence type="ECO:0000305" key="1"/>
<geneLocation type="plasmid">
    <name>sym</name>
</geneLocation>